<gene>
    <name type="primary">RDR6</name>
    <name type="synonym">RDRP6</name>
    <name type="synonym">SDE1</name>
    <name type="synonym">SGS2</name>
    <name type="ordered locus">At3g49500</name>
    <name type="ORF">T1G12.20</name>
    <name type="ORF">T9C5.95</name>
</gene>
<name>RDR6_ARATH</name>
<accession>Q9SG02</accession>
<accession>A0A1I9LSW2</accession>
<accession>Q9LKP0</accession>
<organism>
    <name type="scientific">Arabidopsis thaliana</name>
    <name type="common">Mouse-ear cress</name>
    <dbReference type="NCBI Taxonomy" id="3702"/>
    <lineage>
        <taxon>Eukaryota</taxon>
        <taxon>Viridiplantae</taxon>
        <taxon>Streptophyta</taxon>
        <taxon>Embryophyta</taxon>
        <taxon>Tracheophyta</taxon>
        <taxon>Spermatophyta</taxon>
        <taxon>Magnoliopsida</taxon>
        <taxon>eudicotyledons</taxon>
        <taxon>Gunneridae</taxon>
        <taxon>Pentapetalae</taxon>
        <taxon>rosids</taxon>
        <taxon>malvids</taxon>
        <taxon>Brassicales</taxon>
        <taxon>Brassicaceae</taxon>
        <taxon>Camelineae</taxon>
        <taxon>Arabidopsis</taxon>
    </lineage>
</organism>
<keyword id="KW-0239">DNA-directed DNA polymerase</keyword>
<keyword id="KW-0548">Nucleotidyltransferase</keyword>
<keyword id="KW-0539">Nucleus</keyword>
<keyword id="KW-0611">Plant defense</keyword>
<keyword id="KW-1185">Reference proteome</keyword>
<keyword id="KW-0694">RNA-binding</keyword>
<keyword id="KW-0696">RNA-directed RNA polymerase</keyword>
<keyword id="KW-0943">RNA-mediated gene silencing</keyword>
<keyword id="KW-0808">Transferase</keyword>
<comment type="function">
    <text evidence="1 2 3 4 5 6 7 8 9 10 11 13 14">RNA-dependent RNA polymerase involved in post-transcriptional gene silencing (PTGS). Possesses ssRNA and ssDNA-dependent polymerase activity, but does not have priming activity. Possesses in vitro 3' nucleotidyltransferase activity in the presence of UTP as single nucleotide. Required for the production of 21 nucleotide trans-acting small interfering RNAs (ta-siRNAs) derived from TAS1, TAS2 and TAS3 endogenous transcripts. Acts in the RDR6/SGS3/DCL4/AGO7 ta-siRNA pathway involved in leaf developmental timing. Required for the production of natural siRNAs (nat-siRNAs) derived from cis-natural antisense transcripts. Required for the production of 24 nucleotide nat-siRNAs derived from the stress-related P5CDH-SRO5 antisense gene pair. Required for PTGS induced by transgene direct repeats. Plays an essential role in transitive silencing of transgenes by processing secondary siRNAs. This pathway, which requires DCL2 and DCL4, amplifies silencing by using the target RNA as substrate to generate secondary siRNAs, providing an efficient mechanism for long-distance silencing. Involved in the biogenesis of secondary siRNAs which require 22 nucleotide miRNAs associated to AGO1. Participates synergistically with AS1 and AS2 to proper plant development by repressing the miR165 and miR166 microRNAs (independently of AGO10) that may lead to mRNA degradation of genes in the class III HD-ZIP family. Required for the production of some small RNAs derived from the crucifer-infecting tobamovirus (TMV-cg). Required for sense virus-induced post-transcriptional gene silencing (S-PTGS).</text>
</comment>
<comment type="catalytic activity">
    <reaction>
        <text>RNA(n) + a ribonucleoside 5'-triphosphate = RNA(n+1) + diphosphate</text>
        <dbReference type="Rhea" id="RHEA:21248"/>
        <dbReference type="Rhea" id="RHEA-COMP:14527"/>
        <dbReference type="Rhea" id="RHEA-COMP:17342"/>
        <dbReference type="ChEBI" id="CHEBI:33019"/>
        <dbReference type="ChEBI" id="CHEBI:61557"/>
        <dbReference type="ChEBI" id="CHEBI:140395"/>
        <dbReference type="EC" id="2.7.7.48"/>
    </reaction>
</comment>
<comment type="subunit">
    <text evidence="12">Interacts with SGS3.</text>
</comment>
<comment type="subcellular location">
    <subcellularLocation>
        <location evidence="12">Cytoplasmic granule</location>
    </subcellularLocation>
    <subcellularLocation>
        <location evidence="9">Nucleus</location>
    </subcellularLocation>
    <text evidence="12">Colocalize with SGS3 in cytoplasmic granules distinct from P-bodies.</text>
</comment>
<comment type="tissue specificity">
    <text evidence="5">Widely expressed.</text>
</comment>
<comment type="disruption phenotype">
    <text evidence="1 2 4 9 11 13">First leaves are elongated and curl downward. Presence of stigmatic tissue in the middle of the septum at the apical end of the carpels. Altered post-transcriptional gene silencing (PTGS). Accumulation of ARF4 mRNA (targeted by TAS3-derived siRNAs). Upon infection, over-accumulation of CMV RNA and enhanced susceptibility to cucumber mosaic virus (CMV). Reduced levels of TMV-cg-derived small RNAs.</text>
</comment>
<comment type="similarity">
    <text evidence="15">Belongs to the RdRP family.</text>
</comment>
<sequence>MGSEGNMKKSVVTQVSIGGFGESTTAKQLTDYLEDEVGIVWRCRLKTSWTPPGSYPNFEIADTSNIPSIDEYKKVEPHAFVHFAVFESAGRAMDAAGQCNLILDGQPLKVSLGPKNPYSLNQRRRTTVPYKLAGITLEIGTLVSRDDFFVSWRAEGVDFLVDPFDNTCKFCFRKSTAFSFKDAVMHAVINCDYKLELLVRDIQTVRQYKTLHGFVLILQLASSPRVWYRTADDDIYDTVPGDLLDDDDPWIRTTDFTQVGAIGRCHSYRVLISPRYENKLRTALDYFRMRRVQEERVRWPPRIRNEPCFGEPVSDHFFCIHHKEGISFEIMFLVNSVLHRGVFNQFQLTERFFDLLRNQPKDVNIASLKHLCTYKRPVFDAYKRLKLVQEWIQKNPKLLGSHEQSEDISEIRRLVITPTRAYCLPPEVELSNRVLRRYKAVAERFLRVTFMDESMQTINSNVLSYFVAPIVKDLTSSSFSQKTYVFKRVKSILTDGFKLCGRKYSFLAFSANQLRDRSAWFFAEDGKTRVSDIKTWMGKFKDKNVAKCAARMGLCFSSTYATVDVMPHEVDTEVPDIERNGYVFSDGIGTITPDLADEVMEKLKLDVHYSPCAYQIRYAGFKGVVARWPSKSDGIRLALRDSMKKFFSKHTILEICSWTRFQPGFLNRQIITLLSVLGVPDEIFWDMQESMLYKLNRILDDTDVAFEVLTASCAEQGNTAAIMLSAGFKPKTEPHLRGMLSSVRIAQLWGLREKSRIFVTSGRWLMGCLDEAGILEHGQCFIQVSKPSIENCFSKHGSRFKETKTDLEVVKGYVAIAKNPCLHPGDVRILEAVDVPQLHHMYDCLIFPQKGDRPHTNEASGSDLDGDLYFVAWDQKLIPPNRKSYPAMHYDAAEEKSLGRAVNHQDIIDFFARNLANEQLGTICNAHVVHADRSEYGAMDEECLLLAELAATAVDFPKTGKIVSMPFHLKPKLYPDFMGKEDYQTYKSNKILGRLYRRVKEVYDEDAEASSEESTDPSAIPYDAVLEIPGFEDLIPEAWGHKCLYDGQLIGLLGQYKVQKEEEIVTGHIWSMPKYTSKKQGELKERLKHSYNSLKKEFRKVFEETIPDHENLSEEEKNILYEKKASAWYHVTYHPEWVKKSLELQDPDESSHAAMLSFAWIAADYLARIKIRSREMGSIDSAKPVDSLAKFLAQRL</sequence>
<protein>
    <recommendedName>
        <fullName>RNA-dependent RNA polymerase 6</fullName>
        <shortName>AtRDRP6</shortName>
        <ecNumber>2.7.7.48</ecNumber>
    </recommendedName>
    <alternativeName>
        <fullName>Protein SILENCING DEFECTIVE 1</fullName>
    </alternativeName>
    <alternativeName>
        <fullName>Protein SUPPRESSOR OF GENE SILENCING 2</fullName>
    </alternativeName>
    <alternativeName>
        <fullName>RNA-directed RNA polymerase 6</fullName>
    </alternativeName>
</protein>
<dbReference type="EC" id="2.7.7.48"/>
<dbReference type="EMBL" id="AF239718">
    <property type="protein sequence ID" value="AAF73959.1"/>
    <property type="molecule type" value="Genomic_DNA"/>
</dbReference>
<dbReference type="EMBL" id="AF268093">
    <property type="protein sequence ID" value="AAF74208.1"/>
    <property type="molecule type" value="Genomic_DNA"/>
</dbReference>
<dbReference type="EMBL" id="AC012329">
    <property type="protein sequence ID" value="AAG52184.1"/>
    <property type="molecule type" value="Genomic_DNA"/>
</dbReference>
<dbReference type="EMBL" id="AL132964">
    <property type="protein sequence ID" value="CAB71285.1"/>
    <property type="molecule type" value="Genomic_DNA"/>
</dbReference>
<dbReference type="EMBL" id="CP002686">
    <property type="protein sequence ID" value="AEE78550.1"/>
    <property type="molecule type" value="Genomic_DNA"/>
</dbReference>
<dbReference type="EMBL" id="CP002686">
    <property type="protein sequence ID" value="ANM65667.1"/>
    <property type="molecule type" value="Genomic_DNA"/>
</dbReference>
<dbReference type="EMBL" id="CP002686">
    <property type="protein sequence ID" value="ANM65668.1"/>
    <property type="molecule type" value="Genomic_DNA"/>
</dbReference>
<dbReference type="EMBL" id="CP002686">
    <property type="protein sequence ID" value="ANM65669.1"/>
    <property type="molecule type" value="Genomic_DNA"/>
</dbReference>
<dbReference type="EMBL" id="CP002686">
    <property type="protein sequence ID" value="ANM65670.1"/>
    <property type="molecule type" value="Genomic_DNA"/>
</dbReference>
<dbReference type="RefSeq" id="NP_001327617.1">
    <property type="nucleotide sequence ID" value="NM_001339423.1"/>
</dbReference>
<dbReference type="RefSeq" id="NP_001327618.1">
    <property type="nucleotide sequence ID" value="NM_001339424.1"/>
</dbReference>
<dbReference type="RefSeq" id="NP_001327619.1">
    <property type="nucleotide sequence ID" value="NM_001339425.1"/>
</dbReference>
<dbReference type="RefSeq" id="NP_001327620.1">
    <property type="nucleotide sequence ID" value="NM_001339426.1"/>
</dbReference>
<dbReference type="RefSeq" id="NP_190519.1">
    <property type="nucleotide sequence ID" value="NM_114810.3"/>
</dbReference>
<dbReference type="SMR" id="Q9SG02"/>
<dbReference type="BioGRID" id="9430">
    <property type="interactions" value="1"/>
</dbReference>
<dbReference type="FunCoup" id="Q9SG02">
    <property type="interactions" value="779"/>
</dbReference>
<dbReference type="IntAct" id="Q9SG02">
    <property type="interactions" value="1"/>
</dbReference>
<dbReference type="MINT" id="Q9SG02"/>
<dbReference type="STRING" id="3702.Q9SG02"/>
<dbReference type="PaxDb" id="3702-AT3G49500.1"/>
<dbReference type="ProteomicsDB" id="236991"/>
<dbReference type="EnsemblPlants" id="AT3G49500.1">
    <property type="protein sequence ID" value="AT3G49500.1"/>
    <property type="gene ID" value="AT3G49500"/>
</dbReference>
<dbReference type="EnsemblPlants" id="AT3G49500.2">
    <property type="protein sequence ID" value="AT3G49500.2"/>
    <property type="gene ID" value="AT3G49500"/>
</dbReference>
<dbReference type="EnsemblPlants" id="AT3G49500.3">
    <property type="protein sequence ID" value="AT3G49500.3"/>
    <property type="gene ID" value="AT3G49500"/>
</dbReference>
<dbReference type="EnsemblPlants" id="AT3G49500.4">
    <property type="protein sequence ID" value="AT3G49500.4"/>
    <property type="gene ID" value="AT3G49500"/>
</dbReference>
<dbReference type="EnsemblPlants" id="AT3G49500.5">
    <property type="protein sequence ID" value="AT3G49500.5"/>
    <property type="gene ID" value="AT3G49500"/>
</dbReference>
<dbReference type="GeneID" id="824112"/>
<dbReference type="Gramene" id="AT3G49500.1">
    <property type="protein sequence ID" value="AT3G49500.1"/>
    <property type="gene ID" value="AT3G49500"/>
</dbReference>
<dbReference type="Gramene" id="AT3G49500.2">
    <property type="protein sequence ID" value="AT3G49500.2"/>
    <property type="gene ID" value="AT3G49500"/>
</dbReference>
<dbReference type="Gramene" id="AT3G49500.3">
    <property type="protein sequence ID" value="AT3G49500.3"/>
    <property type="gene ID" value="AT3G49500"/>
</dbReference>
<dbReference type="Gramene" id="AT3G49500.4">
    <property type="protein sequence ID" value="AT3G49500.4"/>
    <property type="gene ID" value="AT3G49500"/>
</dbReference>
<dbReference type="Gramene" id="AT3G49500.5">
    <property type="protein sequence ID" value="AT3G49500.5"/>
    <property type="gene ID" value="AT3G49500"/>
</dbReference>
<dbReference type="KEGG" id="ath:AT3G49500"/>
<dbReference type="Araport" id="AT3G49500"/>
<dbReference type="TAIR" id="AT3G49500">
    <property type="gene designation" value="RDR6"/>
</dbReference>
<dbReference type="eggNOG" id="KOG0988">
    <property type="taxonomic scope" value="Eukaryota"/>
</dbReference>
<dbReference type="HOGENOM" id="CLU_001366_3_1_1"/>
<dbReference type="InParanoid" id="Q9SG02"/>
<dbReference type="OMA" id="IAPFRFP"/>
<dbReference type="PhylomeDB" id="Q9SG02"/>
<dbReference type="BRENDA" id="2.7.7.48">
    <property type="organism ID" value="399"/>
</dbReference>
<dbReference type="CD-CODE" id="A9BEEE91">
    <property type="entry name" value="Sirna body"/>
</dbReference>
<dbReference type="PRO" id="PR:Q9SG02"/>
<dbReference type="Proteomes" id="UP000006548">
    <property type="component" value="Chromosome 3"/>
</dbReference>
<dbReference type="ExpressionAtlas" id="Q9SG02">
    <property type="expression patterns" value="baseline and differential"/>
</dbReference>
<dbReference type="GO" id="GO:0036464">
    <property type="term" value="C:cytoplasmic ribonucleoprotein granule"/>
    <property type="evidence" value="ECO:0000314"/>
    <property type="project" value="FlyBase"/>
</dbReference>
<dbReference type="GO" id="GO:0005634">
    <property type="term" value="C:nucleus"/>
    <property type="evidence" value="ECO:0000314"/>
    <property type="project" value="TAIR"/>
</dbReference>
<dbReference type="GO" id="GO:0003887">
    <property type="term" value="F:DNA-directed DNA polymerase activity"/>
    <property type="evidence" value="ECO:0007669"/>
    <property type="project" value="UniProtKB-KW"/>
</dbReference>
<dbReference type="GO" id="GO:0003723">
    <property type="term" value="F:RNA binding"/>
    <property type="evidence" value="ECO:0007669"/>
    <property type="project" value="UniProtKB-KW"/>
</dbReference>
<dbReference type="GO" id="GO:0003968">
    <property type="term" value="F:RNA-directed RNA polymerase activity"/>
    <property type="evidence" value="ECO:0000250"/>
    <property type="project" value="TAIR"/>
</dbReference>
<dbReference type="GO" id="GO:0051607">
    <property type="term" value="P:defense response to virus"/>
    <property type="evidence" value="ECO:0000315"/>
    <property type="project" value="TAIR"/>
</dbReference>
<dbReference type="GO" id="GO:0048467">
    <property type="term" value="P:gynoecium development"/>
    <property type="evidence" value="ECO:0000315"/>
    <property type="project" value="TAIR"/>
</dbReference>
<dbReference type="GO" id="GO:0048366">
    <property type="term" value="P:leaf development"/>
    <property type="evidence" value="ECO:0000316"/>
    <property type="project" value="TAIR"/>
</dbReference>
<dbReference type="GO" id="GO:0010492">
    <property type="term" value="P:maintenance of shoot apical meristem identity"/>
    <property type="evidence" value="ECO:0007669"/>
    <property type="project" value="EnsemblPlants"/>
</dbReference>
<dbReference type="GO" id="GO:0048544">
    <property type="term" value="P:recognition of pollen"/>
    <property type="evidence" value="ECO:0000315"/>
    <property type="project" value="TAIR"/>
</dbReference>
<dbReference type="GO" id="GO:0031047">
    <property type="term" value="P:regulatory ncRNA-mediated gene silencing"/>
    <property type="evidence" value="ECO:0000315"/>
    <property type="project" value="TAIR"/>
</dbReference>
<dbReference type="GO" id="GO:0035194">
    <property type="term" value="P:regulatory ncRNA-mediated post-transcriptional gene silencing"/>
    <property type="evidence" value="ECO:0000315"/>
    <property type="project" value="TAIR"/>
</dbReference>
<dbReference type="GO" id="GO:0009616">
    <property type="term" value="P:RNAi-mediated antiviral immune response"/>
    <property type="evidence" value="ECO:0000315"/>
    <property type="project" value="TAIR"/>
</dbReference>
<dbReference type="GO" id="GO:0030422">
    <property type="term" value="P:siRNA processing"/>
    <property type="evidence" value="ECO:0000315"/>
    <property type="project" value="FlyBase"/>
</dbReference>
<dbReference type="GO" id="GO:0070549">
    <property type="term" value="P:siRNA-mediated gene silencing by inhibition of translation"/>
    <property type="evidence" value="ECO:0000315"/>
    <property type="project" value="FlyBase"/>
</dbReference>
<dbReference type="GO" id="GO:0010267">
    <property type="term" value="P:ta-siRNA processing"/>
    <property type="evidence" value="ECO:0000315"/>
    <property type="project" value="FlyBase"/>
</dbReference>
<dbReference type="CDD" id="cd00590">
    <property type="entry name" value="RRM_SF"/>
    <property type="match status" value="1"/>
</dbReference>
<dbReference type="InterPro" id="IPR035979">
    <property type="entry name" value="RBD_domain_sf"/>
</dbReference>
<dbReference type="InterPro" id="IPR007855">
    <property type="entry name" value="RNA-dep_RNA_pol_euk-typ"/>
</dbReference>
<dbReference type="PANTHER" id="PTHR23079">
    <property type="entry name" value="RNA-DEPENDENT RNA POLYMERASE"/>
    <property type="match status" value="1"/>
</dbReference>
<dbReference type="PANTHER" id="PTHR23079:SF18">
    <property type="entry name" value="RNA-DEPENDENT RNA POLYMERASE 6"/>
    <property type="match status" value="1"/>
</dbReference>
<dbReference type="Pfam" id="PF24572">
    <property type="entry name" value="RBD_RDR6"/>
    <property type="match status" value="1"/>
</dbReference>
<dbReference type="Pfam" id="PF24577">
    <property type="entry name" value="RDR6_2nd"/>
    <property type="match status" value="1"/>
</dbReference>
<dbReference type="Pfam" id="PF05183">
    <property type="entry name" value="RdRP"/>
    <property type="match status" value="1"/>
</dbReference>
<dbReference type="SUPFAM" id="SSF54928">
    <property type="entry name" value="RNA-binding domain, RBD"/>
    <property type="match status" value="1"/>
</dbReference>
<evidence type="ECO:0000269" key="1">
    <source>
    </source>
</evidence>
<evidence type="ECO:0000269" key="2">
    <source>
    </source>
</evidence>
<evidence type="ECO:0000269" key="3">
    <source>
    </source>
</evidence>
<evidence type="ECO:0000269" key="4">
    <source>
    </source>
</evidence>
<evidence type="ECO:0000269" key="5">
    <source>
    </source>
</evidence>
<evidence type="ECO:0000269" key="6">
    <source>
    </source>
</evidence>
<evidence type="ECO:0000269" key="7">
    <source>
    </source>
</evidence>
<evidence type="ECO:0000269" key="8">
    <source>
    </source>
</evidence>
<evidence type="ECO:0000269" key="9">
    <source>
    </source>
</evidence>
<evidence type="ECO:0000269" key="10">
    <source>
    </source>
</evidence>
<evidence type="ECO:0000269" key="11">
    <source>
    </source>
</evidence>
<evidence type="ECO:0000269" key="12">
    <source>
    </source>
</evidence>
<evidence type="ECO:0000269" key="13">
    <source>
    </source>
</evidence>
<evidence type="ECO:0000269" key="14">
    <source>
    </source>
</evidence>
<evidence type="ECO:0000305" key="15"/>
<proteinExistence type="evidence at protein level"/>
<feature type="chain" id="PRO_0000404677" description="RNA-dependent RNA polymerase 6">
    <location>
        <begin position="1"/>
        <end position="1196"/>
    </location>
</feature>
<feature type="mutagenesis site" description="Alters post-transcriptional gene silencing." evidence="1">
    <original>E</original>
    <variation>K</variation>
    <location>
        <position position="429"/>
    </location>
</feature>
<feature type="mutagenesis site" description="Alters post-transcriptional gene silencing." evidence="1">
    <original>E</original>
    <variation>K</variation>
    <location>
        <position position="453"/>
    </location>
</feature>
<feature type="mutagenesis site" description="Alters post-transcriptional gene silencing." evidence="8">
    <original>P</original>
    <variation>L</variation>
    <location>
        <position position="611"/>
    </location>
</feature>
<feature type="mutagenesis site" description="Alters post-transcriptional gene silencing." evidence="1">
    <original>G</original>
    <variation>E</variation>
    <location>
        <position position="825"/>
    </location>
</feature>
<feature type="mutagenesis site" description="Alters post-transcriptional gene silencing." evidence="1 8">
    <original>D</original>
    <variation>N</variation>
    <location>
        <position position="826"/>
    </location>
</feature>
<feature type="mutagenesis site" description="Alters post-transcriptional gene silencing." evidence="1">
    <original>S</original>
    <variation>F</variation>
    <location>
        <position position="860"/>
    </location>
</feature>
<feature type="mutagenesis site" description="In rdr6-13; alters post-transcriptional gene silencing." evidence="1 4">
    <original>G</original>
    <variation>E</variation>
    <location>
        <position position="866"/>
    </location>
</feature>
<feature type="mutagenesis site" description="Loss of polymerase activity." evidence="10">
    <original>D</original>
    <variation>A</variation>
    <location>
        <position position="867"/>
    </location>
</feature>
<feature type="sequence conflict" description="In Ref. 2; AAF74208." evidence="15" ref="2">
    <original>D</original>
    <variation>G</variation>
    <location>
        <position position="597"/>
    </location>
</feature>
<feature type="sequence conflict" description="In Ref. 2; AAF74208." evidence="15" ref="2">
    <original>F</original>
    <variation>I</variation>
    <location>
        <position position="646"/>
    </location>
</feature>
<feature type="sequence conflict" description="In Ref. 2; AAF74208." evidence="15" ref="2">
    <original>D</original>
    <variation>V</variation>
    <location>
        <position position="681"/>
    </location>
</feature>
<feature type="sequence conflict" description="In Ref. 2; AAF74208." evidence="15" ref="2">
    <original>N</original>
    <variation>D</variation>
    <location>
        <position position="696"/>
    </location>
</feature>
<feature type="sequence conflict" description="In Ref. 2; AAF74208." evidence="15" ref="2">
    <original>D</original>
    <variation>V</variation>
    <location>
        <position position="700"/>
    </location>
</feature>
<feature type="sequence conflict" description="In Ref. 2; AAF74208." evidence="15" ref="2">
    <original>T</original>
    <variation>K</variation>
    <location>
        <position position="805"/>
    </location>
</feature>
<feature type="sequence conflict" description="In Ref. 2; AAF74208." evidence="15" ref="2">
    <original>R</original>
    <variation>P</variation>
    <location>
        <position position="998"/>
    </location>
</feature>
<feature type="sequence conflict" description="In Ref. 2; AAF74208." evidence="15" ref="2">
    <original>L</original>
    <variation>S</variation>
    <location>
        <position position="1044"/>
    </location>
</feature>
<reference key="1">
    <citation type="journal article" date="2000" name="Cell">
        <title>Arabidopsis SGS2 and SGS3 genes are required for posttranscriptional gene silencing and natural virus resistance.</title>
        <authorList>
            <person name="Mourrain P."/>
            <person name="Beclin C."/>
            <person name="Elmayan T."/>
            <person name="Feuerbach F."/>
            <person name="Godon C."/>
            <person name="Morel J.-B."/>
            <person name="Jouette D."/>
            <person name="Lacombe A.-M."/>
            <person name="Nikic S."/>
            <person name="Picault N."/>
            <person name="Remoue K."/>
            <person name="Sanial M."/>
            <person name="Vo T.-A."/>
            <person name="Vaucheret H."/>
        </authorList>
    </citation>
    <scope>NUCLEOTIDE SEQUENCE [GENOMIC DNA]</scope>
    <scope>FUNCTION</scope>
    <scope>DISRUPTION PHENOTYPE</scope>
    <scope>MUTAGENESIS OF GLU-429; GLU-453; GLY-825; ASP-826; SER-860 AND GLY-866</scope>
    <source>
        <strain>cv. Columbia</strain>
    </source>
</reference>
<reference key="2">
    <citation type="journal article" date="2000" name="Cell">
        <title>An RNA-dependent RNA polymerase gene in Arabidopsis is required for posttranscriptional gene silencing mediated by a transgene but not by a virus.</title>
        <authorList>
            <person name="Dalmay T."/>
            <person name="Hamilton A."/>
            <person name="Rudd S."/>
            <person name="Angell S."/>
            <person name="Baulcombe D.C."/>
        </authorList>
    </citation>
    <scope>NUCLEOTIDE SEQUENCE [GENOMIC DNA]</scope>
    <scope>FUNCTION</scope>
    <scope>DISRUPTION PHENOTYPE</scope>
</reference>
<reference key="3">
    <citation type="journal article" date="2000" name="Nature">
        <title>Sequence and analysis of chromosome 3 of the plant Arabidopsis thaliana.</title>
        <authorList>
            <person name="Salanoubat M."/>
            <person name="Lemcke K."/>
            <person name="Rieger M."/>
            <person name="Ansorge W."/>
            <person name="Unseld M."/>
            <person name="Fartmann B."/>
            <person name="Valle G."/>
            <person name="Bloecker H."/>
            <person name="Perez-Alonso M."/>
            <person name="Obermaier B."/>
            <person name="Delseny M."/>
            <person name="Boutry M."/>
            <person name="Grivell L.A."/>
            <person name="Mache R."/>
            <person name="Puigdomenech P."/>
            <person name="De Simone V."/>
            <person name="Choisne N."/>
            <person name="Artiguenave F."/>
            <person name="Robert C."/>
            <person name="Brottier P."/>
            <person name="Wincker P."/>
            <person name="Cattolico L."/>
            <person name="Weissenbach J."/>
            <person name="Saurin W."/>
            <person name="Quetier F."/>
            <person name="Schaefer M."/>
            <person name="Mueller-Auer S."/>
            <person name="Gabel C."/>
            <person name="Fuchs M."/>
            <person name="Benes V."/>
            <person name="Wurmbach E."/>
            <person name="Drzonek H."/>
            <person name="Erfle H."/>
            <person name="Jordan N."/>
            <person name="Bangert S."/>
            <person name="Wiedelmann R."/>
            <person name="Kranz H."/>
            <person name="Voss H."/>
            <person name="Holland R."/>
            <person name="Brandt P."/>
            <person name="Nyakatura G."/>
            <person name="Vezzi A."/>
            <person name="D'Angelo M."/>
            <person name="Pallavicini A."/>
            <person name="Toppo S."/>
            <person name="Simionati B."/>
            <person name="Conrad A."/>
            <person name="Hornischer K."/>
            <person name="Kauer G."/>
            <person name="Loehnert T.-H."/>
            <person name="Nordsiek G."/>
            <person name="Reichelt J."/>
            <person name="Scharfe M."/>
            <person name="Schoen O."/>
            <person name="Bargues M."/>
            <person name="Terol J."/>
            <person name="Climent J."/>
            <person name="Navarro P."/>
            <person name="Collado C."/>
            <person name="Perez-Perez A."/>
            <person name="Ottenwaelder B."/>
            <person name="Duchemin D."/>
            <person name="Cooke R."/>
            <person name="Laudie M."/>
            <person name="Berger-Llauro C."/>
            <person name="Purnelle B."/>
            <person name="Masuy D."/>
            <person name="de Haan M."/>
            <person name="Maarse A.C."/>
            <person name="Alcaraz J.-P."/>
            <person name="Cottet A."/>
            <person name="Casacuberta E."/>
            <person name="Monfort A."/>
            <person name="Argiriou A."/>
            <person name="Flores M."/>
            <person name="Liguori R."/>
            <person name="Vitale D."/>
            <person name="Mannhaupt G."/>
            <person name="Haase D."/>
            <person name="Schoof H."/>
            <person name="Rudd S."/>
            <person name="Zaccaria P."/>
            <person name="Mewes H.-W."/>
            <person name="Mayer K.F.X."/>
            <person name="Kaul S."/>
            <person name="Town C.D."/>
            <person name="Koo H.L."/>
            <person name="Tallon L.J."/>
            <person name="Jenkins J."/>
            <person name="Rooney T."/>
            <person name="Rizzo M."/>
            <person name="Walts A."/>
            <person name="Utterback T."/>
            <person name="Fujii C.Y."/>
            <person name="Shea T.P."/>
            <person name="Creasy T.H."/>
            <person name="Haas B."/>
            <person name="Maiti R."/>
            <person name="Wu D."/>
            <person name="Peterson J."/>
            <person name="Van Aken S."/>
            <person name="Pai G."/>
            <person name="Militscher J."/>
            <person name="Sellers P."/>
            <person name="Gill J.E."/>
            <person name="Feldblyum T.V."/>
            <person name="Preuss D."/>
            <person name="Lin X."/>
            <person name="Nierman W.C."/>
            <person name="Salzberg S.L."/>
            <person name="White O."/>
            <person name="Venter J.C."/>
            <person name="Fraser C.M."/>
            <person name="Kaneko T."/>
            <person name="Nakamura Y."/>
            <person name="Sato S."/>
            <person name="Kato T."/>
            <person name="Asamizu E."/>
            <person name="Sasamoto S."/>
            <person name="Kimura T."/>
            <person name="Idesawa K."/>
            <person name="Kawashima K."/>
            <person name="Kishida Y."/>
            <person name="Kiyokawa C."/>
            <person name="Kohara M."/>
            <person name="Matsumoto M."/>
            <person name="Matsuno A."/>
            <person name="Muraki A."/>
            <person name="Nakayama S."/>
            <person name="Nakazaki N."/>
            <person name="Shinpo S."/>
            <person name="Takeuchi C."/>
            <person name="Wada T."/>
            <person name="Watanabe A."/>
            <person name="Yamada M."/>
            <person name="Yasuda M."/>
            <person name="Tabata S."/>
        </authorList>
    </citation>
    <scope>NUCLEOTIDE SEQUENCE [LARGE SCALE GENOMIC DNA]</scope>
    <source>
        <strain>cv. Columbia</strain>
    </source>
</reference>
<reference key="4">
    <citation type="journal article" date="2017" name="Plant J.">
        <title>Araport11: a complete reannotation of the Arabidopsis thaliana reference genome.</title>
        <authorList>
            <person name="Cheng C.Y."/>
            <person name="Krishnakumar V."/>
            <person name="Chan A.P."/>
            <person name="Thibaud-Nissen F."/>
            <person name="Schobel S."/>
            <person name="Town C.D."/>
        </authorList>
    </citation>
    <scope>GENOME REANNOTATION</scope>
    <source>
        <strain>cv. Columbia</strain>
    </source>
</reference>
<reference key="5">
    <citation type="journal article" date="2004" name="Genes Dev.">
        <title>SGS3 and SGS2/SDE1/RDR6 are required for juvenile development and the production of trans-acting siRNAs in Arabidopsis.</title>
        <authorList>
            <person name="Peragine A."/>
            <person name="Yoshikawa M."/>
            <person name="Wu G."/>
            <person name="Albrecht H.L."/>
            <person name="Poethig R.S."/>
        </authorList>
    </citation>
    <scope>FUNCTION</scope>
    <scope>DISRUPTION PHENOTYPE</scope>
    <scope>MUTAGENESIS OF GLY-866</scope>
</reference>
<reference key="6">
    <citation type="journal article" date="2004" name="Plant J.">
        <title>Geminivirus VIGS of endogenous genes requires SGS2/SDE1 and SGS3 and defines a new branch in the genetic pathway for silencing in plants.</title>
        <authorList>
            <person name="Muangsan N."/>
            <person name="Beclin C."/>
            <person name="Vaucheret H."/>
            <person name="Robertson D."/>
        </authorList>
    </citation>
    <scope>FUNCTION</scope>
</reference>
<reference key="7">
    <citation type="journal article" date="2005" name="Cell">
        <title>Endogenous siRNAs derived from a pair of natural cis-antisense transcripts regulate salt tolerance in Arabidopsis.</title>
        <authorList>
            <person name="Borsani O."/>
            <person name="Zhu J."/>
            <person name="Verslues P.E."/>
            <person name="Sunkar R."/>
            <person name="Zhu J.-K."/>
        </authorList>
    </citation>
    <scope>FUNCTION</scope>
</reference>
<reference key="8">
    <citation type="journal article" date="2005" name="Genes Dev.">
        <title>A pathway for the biogenesis of trans-acting siRNAs in Arabidopsis.</title>
        <authorList>
            <person name="Yoshikawa M."/>
            <person name="Peragine A."/>
            <person name="Park M.Y."/>
            <person name="Poethig R.S."/>
        </authorList>
    </citation>
    <scope>FUNCTION</scope>
</reference>
<reference key="9">
    <citation type="journal article" date="2005" name="Plant Cell">
        <title>The Putative RNA-dependent RNA polymerase RDR6 acts synergistically with ASYMMETRIC LEAVES1 and 2 to repress BREVIPEDICELLUS and MicroRNA165/166 in Arabidopsis leaf development.</title>
        <authorList>
            <person name="Li H."/>
            <person name="Xu L."/>
            <person name="Wang H."/>
            <person name="Yuan Z."/>
            <person name="Cao X."/>
            <person name="Yang Z."/>
            <person name="Zhang D."/>
            <person name="Xu Y."/>
            <person name="Huang H."/>
        </authorList>
    </citation>
    <scope>FUNCTION</scope>
    <scope>TISSUE SPECIFICITY</scope>
</reference>
<reference key="10">
    <citation type="journal article" date="2006" name="Curr. Biol.">
        <title>DRB4-dependent TAS3 trans-acting siRNAs control leaf morphology through AGO7.</title>
        <authorList>
            <person name="Adenot X."/>
            <person name="Elmayan T."/>
            <person name="Lauressergues D."/>
            <person name="Boutet S."/>
            <person name="Bouche N."/>
            <person name="Gasciolli V."/>
            <person name="Vaucheret H."/>
        </authorList>
    </citation>
    <scope>FUNCTION</scope>
    <scope>MUTAGENESIS OF PRO-611 AND ASP-826</scope>
</reference>
<reference key="11">
    <citation type="journal article" date="2007" name="Plant Cell">
        <title>Improperly terminated, unpolyadenylated mRNA of sense transgenes is targeted by RDR6-mediated RNA silencing in Arabidopsis.</title>
        <authorList>
            <person name="Luo Z."/>
            <person name="Chen Z."/>
        </authorList>
    </citation>
    <scope>FUNCTION</scope>
    <scope>SUBCELLULAR LOCATION</scope>
    <scope>DISRUPTION PHENOTYPE</scope>
</reference>
<reference key="12">
    <citation type="journal article" date="2008" name="J. Biol. Chem.">
        <title>Biochemical activities of Arabidopsis RNA-dependent RNA polymerase 6.</title>
        <authorList>
            <person name="Curaba J."/>
            <person name="Chen X."/>
        </authorList>
    </citation>
    <scope>FUNCTION</scope>
    <scope>MUTAGENESIS OF ASP-867</scope>
</reference>
<reference key="13">
    <citation type="journal article" date="2009" name="FEBS Lett.">
        <title>SGS3 and RDR6 interact and colocalize in cytoplasmic SGS3/RDR6-bodies.</title>
        <authorList>
            <person name="Kumakura N."/>
            <person name="Takeda A."/>
            <person name="Fujioka Y."/>
            <person name="Motose H."/>
            <person name="Takano R."/>
            <person name="Watanabe Y."/>
        </authorList>
    </citation>
    <scope>SUBCELLULAR LOCATION</scope>
    <scope>INTERACTION WITH SGS3</scope>
</reference>
<reference key="14">
    <citation type="journal article" date="2009" name="PLoS ONE">
        <title>Small RNA deep sequencing reveals role for Arabidopsis thaliana RNA-dependent RNA polymerases in viral siRNA biogenesis.</title>
        <authorList>
            <person name="Qi X."/>
            <person name="Bao F.S."/>
            <person name="Xie Z."/>
        </authorList>
    </citation>
    <scope>FUNCTION</scope>
    <scope>DISRUPTION PHENOTYPE</scope>
</reference>
<reference key="15">
    <citation type="journal article" date="2010" name="Nature">
        <title>Control of female gamete formation by a small RNA pathway in Arabidopsis.</title>
        <authorList>
            <person name="Olmedo-Monfil V."/>
            <person name="Duran-Figueroa N."/>
            <person name="Arteaga-Vazquez M."/>
            <person name="Demesa-Arevalo E."/>
            <person name="Autran D."/>
            <person name="Grimanelli D."/>
            <person name="Slotkin R.K."/>
            <person name="Martienssen R.A."/>
            <person name="Vielle-Calzada J.P."/>
        </authorList>
    </citation>
    <scope>FUNCTION</scope>
    <scope>DISRUPTION PHENOTYPE</scope>
</reference>
<reference key="16">
    <citation type="journal article" date="2010" name="Nat. Struct. Mol. Biol.">
        <title>Unique functionality of 22-nt miRNAs in triggering RDR6-dependent siRNA biogenesis from target transcripts in Arabidopsis.</title>
        <authorList>
            <person name="Cuperus J.T."/>
            <person name="Carbonell A."/>
            <person name="Fahlgren N."/>
            <person name="Garcia-Ruiz H."/>
            <person name="Burke R.T."/>
            <person name="Takeda A."/>
            <person name="Sullivan C.M."/>
            <person name="Gilbert S.D."/>
            <person name="Montgomery T.A."/>
            <person name="Carrington J.C."/>
        </authorList>
    </citation>
    <scope>FUNCTION</scope>
</reference>